<dbReference type="EC" id="7.1.1.-" evidence="1"/>
<dbReference type="EMBL" id="EF115542">
    <property type="protein sequence ID" value="ABK79548.1"/>
    <property type="molecule type" value="Genomic_DNA"/>
</dbReference>
<dbReference type="RefSeq" id="YP_899459.1">
    <property type="nucleotide sequence ID" value="NC_008602.1"/>
</dbReference>
<dbReference type="SMR" id="A1E9X6"/>
<dbReference type="FunCoup" id="A1E9X6">
    <property type="interactions" value="24"/>
</dbReference>
<dbReference type="STRING" id="4558.A1E9X6"/>
<dbReference type="EnsemblPlants" id="EES17346">
    <property type="protein sequence ID" value="EES17346"/>
    <property type="gene ID" value="SORBI_3008G160300"/>
</dbReference>
<dbReference type="GeneID" id="4549154"/>
<dbReference type="Gramene" id="EES17346">
    <property type="protein sequence ID" value="EES17346"/>
    <property type="gene ID" value="SORBI_3008G160300"/>
</dbReference>
<dbReference type="KEGG" id="sbi:4549154"/>
<dbReference type="eggNOG" id="KOG4669">
    <property type="taxonomic scope" value="Eukaryota"/>
</dbReference>
<dbReference type="InParanoid" id="A1E9X6"/>
<dbReference type="OMA" id="FDVWLSR"/>
<dbReference type="OrthoDB" id="688188at2759"/>
<dbReference type="Proteomes" id="UP000000768">
    <property type="component" value="Chloroplast"/>
</dbReference>
<dbReference type="ExpressionAtlas" id="A1E9X6">
    <property type="expression patterns" value="baseline"/>
</dbReference>
<dbReference type="GO" id="GO:0009535">
    <property type="term" value="C:chloroplast thylakoid membrane"/>
    <property type="evidence" value="ECO:0007669"/>
    <property type="project" value="UniProtKB-SubCell"/>
</dbReference>
<dbReference type="GO" id="GO:0030964">
    <property type="term" value="C:NADH dehydrogenase complex"/>
    <property type="evidence" value="ECO:0000318"/>
    <property type="project" value="GO_Central"/>
</dbReference>
<dbReference type="GO" id="GO:0016655">
    <property type="term" value="F:oxidoreductase activity, acting on NAD(P)H, quinone or similar compound as acceptor"/>
    <property type="evidence" value="ECO:0007669"/>
    <property type="project" value="UniProtKB-UniRule"/>
</dbReference>
<dbReference type="GO" id="GO:0048038">
    <property type="term" value="F:quinone binding"/>
    <property type="evidence" value="ECO:0007669"/>
    <property type="project" value="UniProtKB-KW"/>
</dbReference>
<dbReference type="GO" id="GO:0042773">
    <property type="term" value="P:ATP synthesis coupled electron transport"/>
    <property type="evidence" value="ECO:0007669"/>
    <property type="project" value="InterPro"/>
</dbReference>
<dbReference type="GO" id="GO:0019684">
    <property type="term" value="P:photosynthesis, light reaction"/>
    <property type="evidence" value="ECO:0007669"/>
    <property type="project" value="UniProtKB-UniRule"/>
</dbReference>
<dbReference type="FunFam" id="1.10.287.3510:FF:000001">
    <property type="entry name" value="NADH-quinone oxidoreductase subunit K"/>
    <property type="match status" value="1"/>
</dbReference>
<dbReference type="Gene3D" id="1.10.287.3510">
    <property type="match status" value="1"/>
</dbReference>
<dbReference type="HAMAP" id="MF_01456">
    <property type="entry name" value="NDH1_NuoK"/>
    <property type="match status" value="1"/>
</dbReference>
<dbReference type="InterPro" id="IPR001133">
    <property type="entry name" value="NADH_UbQ_OxRdtase_chain4L/K"/>
</dbReference>
<dbReference type="InterPro" id="IPR039428">
    <property type="entry name" value="NUOK/Mnh_C1-like"/>
</dbReference>
<dbReference type="NCBIfam" id="NF004320">
    <property type="entry name" value="PRK05715.1-2"/>
    <property type="match status" value="1"/>
</dbReference>
<dbReference type="PANTHER" id="PTHR11434:SF16">
    <property type="entry name" value="NADH-UBIQUINONE OXIDOREDUCTASE CHAIN 4L"/>
    <property type="match status" value="1"/>
</dbReference>
<dbReference type="PANTHER" id="PTHR11434">
    <property type="entry name" value="NADH-UBIQUINONE OXIDOREDUCTASE SUBUNIT ND4L"/>
    <property type="match status" value="1"/>
</dbReference>
<dbReference type="Pfam" id="PF00420">
    <property type="entry name" value="Oxidored_q2"/>
    <property type="match status" value="1"/>
</dbReference>
<geneLocation type="chloroplast"/>
<proteinExistence type="inferred from homology"/>
<name>NU4LC_SORBI</name>
<keyword id="KW-0150">Chloroplast</keyword>
<keyword id="KW-0472">Membrane</keyword>
<keyword id="KW-0520">NAD</keyword>
<keyword id="KW-0521">NADP</keyword>
<keyword id="KW-0934">Plastid</keyword>
<keyword id="KW-0618">Plastoquinone</keyword>
<keyword id="KW-0874">Quinone</keyword>
<keyword id="KW-1185">Reference proteome</keyword>
<keyword id="KW-0793">Thylakoid</keyword>
<keyword id="KW-1278">Translocase</keyword>
<keyword id="KW-0812">Transmembrane</keyword>
<keyword id="KW-1133">Transmembrane helix</keyword>
<keyword id="KW-0813">Transport</keyword>
<gene>
    <name evidence="1" type="primary">ndhE</name>
</gene>
<protein>
    <recommendedName>
        <fullName evidence="1">NAD(P)H-quinone oxidoreductase subunit 4L, chloroplastic</fullName>
        <ecNumber evidence="1">7.1.1.-</ecNumber>
    </recommendedName>
    <alternativeName>
        <fullName evidence="1">NAD(P)H dehydrogenase subunit 4L</fullName>
    </alternativeName>
    <alternativeName>
        <fullName evidence="1">NADH-plastoquinone oxidoreductase subunit 4L</fullName>
    </alternativeName>
</protein>
<evidence type="ECO:0000255" key="1">
    <source>
        <dbReference type="HAMAP-Rule" id="MF_01456"/>
    </source>
</evidence>
<feature type="chain" id="PRO_0000360367" description="NAD(P)H-quinone oxidoreductase subunit 4L, chloroplastic">
    <location>
        <begin position="1"/>
        <end position="101"/>
    </location>
</feature>
<feature type="transmembrane region" description="Helical" evidence="1">
    <location>
        <begin position="2"/>
        <end position="22"/>
    </location>
</feature>
<feature type="transmembrane region" description="Helical" evidence="1">
    <location>
        <begin position="32"/>
        <end position="52"/>
    </location>
</feature>
<feature type="transmembrane region" description="Helical" evidence="1">
    <location>
        <begin position="61"/>
        <end position="81"/>
    </location>
</feature>
<comment type="function">
    <text evidence="1">NDH shuttles electrons from NAD(P)H:plastoquinone, via FMN and iron-sulfur (Fe-S) centers, to quinones in the photosynthetic chain and possibly in a chloroplast respiratory chain. The immediate electron acceptor for the enzyme in this species is believed to be plastoquinone. Couples the redox reaction to proton translocation, and thus conserves the redox energy in a proton gradient.</text>
</comment>
<comment type="catalytic activity">
    <reaction evidence="1">
        <text>a plastoquinone + NADH + (n+1) H(+)(in) = a plastoquinol + NAD(+) + n H(+)(out)</text>
        <dbReference type="Rhea" id="RHEA:42608"/>
        <dbReference type="Rhea" id="RHEA-COMP:9561"/>
        <dbReference type="Rhea" id="RHEA-COMP:9562"/>
        <dbReference type="ChEBI" id="CHEBI:15378"/>
        <dbReference type="ChEBI" id="CHEBI:17757"/>
        <dbReference type="ChEBI" id="CHEBI:57540"/>
        <dbReference type="ChEBI" id="CHEBI:57945"/>
        <dbReference type="ChEBI" id="CHEBI:62192"/>
    </reaction>
</comment>
<comment type="catalytic activity">
    <reaction evidence="1">
        <text>a plastoquinone + NADPH + (n+1) H(+)(in) = a plastoquinol + NADP(+) + n H(+)(out)</text>
        <dbReference type="Rhea" id="RHEA:42612"/>
        <dbReference type="Rhea" id="RHEA-COMP:9561"/>
        <dbReference type="Rhea" id="RHEA-COMP:9562"/>
        <dbReference type="ChEBI" id="CHEBI:15378"/>
        <dbReference type="ChEBI" id="CHEBI:17757"/>
        <dbReference type="ChEBI" id="CHEBI:57783"/>
        <dbReference type="ChEBI" id="CHEBI:58349"/>
        <dbReference type="ChEBI" id="CHEBI:62192"/>
    </reaction>
</comment>
<comment type="subunit">
    <text evidence="1">NDH is composed of at least 16 different subunits, 5 of which are encoded in the nucleus.</text>
</comment>
<comment type="subcellular location">
    <subcellularLocation>
        <location evidence="1">Plastid</location>
        <location evidence="1">Chloroplast thylakoid membrane</location>
        <topology evidence="1">Multi-pass membrane protein</topology>
    </subcellularLocation>
</comment>
<comment type="similarity">
    <text evidence="1">Belongs to the complex I subunit 4L family.</text>
</comment>
<reference key="1">
    <citation type="journal article" date="2007" name="Theor. Appl. Genet.">
        <title>Complete chloroplast genome sequences of Hordeum vulgare, Sorghum bicolor and Agrostis stolonifera, and comparative analyses with other grass genomes.</title>
        <authorList>
            <person name="Saski C."/>
            <person name="Lee S.-B."/>
            <person name="Fjellheim S."/>
            <person name="Guda C."/>
            <person name="Jansen R.K."/>
            <person name="Luo H."/>
            <person name="Tomkins J."/>
            <person name="Rognli O.A."/>
            <person name="Daniell H."/>
            <person name="Clarke J.L."/>
        </authorList>
    </citation>
    <scope>NUCLEOTIDE SEQUENCE [LARGE SCALE GENOMIC DNA]</scope>
    <source>
        <strain>cv. BTx623</strain>
    </source>
</reference>
<accession>A1E9X6</accession>
<sequence>MMFEHVLFLSVYLFSIGIYGLITSRNMVRALICLELILNSINLNLVTFSDLFDSRQLKGDIFAIFVIALAAAEAAIGLSILSSIHRNRKSTRINQSNFLNN</sequence>
<organism>
    <name type="scientific">Sorghum bicolor</name>
    <name type="common">Sorghum</name>
    <name type="synonym">Sorghum vulgare</name>
    <dbReference type="NCBI Taxonomy" id="4558"/>
    <lineage>
        <taxon>Eukaryota</taxon>
        <taxon>Viridiplantae</taxon>
        <taxon>Streptophyta</taxon>
        <taxon>Embryophyta</taxon>
        <taxon>Tracheophyta</taxon>
        <taxon>Spermatophyta</taxon>
        <taxon>Magnoliopsida</taxon>
        <taxon>Liliopsida</taxon>
        <taxon>Poales</taxon>
        <taxon>Poaceae</taxon>
        <taxon>PACMAD clade</taxon>
        <taxon>Panicoideae</taxon>
        <taxon>Andropogonodae</taxon>
        <taxon>Andropogoneae</taxon>
        <taxon>Sorghinae</taxon>
        <taxon>Sorghum</taxon>
    </lineage>
</organism>